<evidence type="ECO:0000250" key="1"/>
<evidence type="ECO:0000250" key="2">
    <source>
        <dbReference type="UniProtKB" id="P00747"/>
    </source>
</evidence>
<evidence type="ECO:0000255" key="3"/>
<evidence type="ECO:0000255" key="4">
    <source>
        <dbReference type="PROSITE-ProRule" id="PRU00121"/>
    </source>
</evidence>
<evidence type="ECO:0000255" key="5">
    <source>
        <dbReference type="PROSITE-ProRule" id="PRU00274"/>
    </source>
</evidence>
<evidence type="ECO:0000255" key="6">
    <source>
        <dbReference type="PROSITE-ProRule" id="PRU00315"/>
    </source>
</evidence>
<evidence type="ECO:0000256" key="7">
    <source>
        <dbReference type="SAM" id="MobiDB-lite"/>
    </source>
</evidence>
<reference key="1">
    <citation type="journal article" date="1995" name="J. Biol. Chem.">
        <title>The recurring evolution of lipoprotein(a). Insights from cloning of hedgehog apolipoprotein(a).</title>
        <authorList>
            <person name="Lawn R.M."/>
            <person name="Boonmark N.W."/>
            <person name="Schwartz K."/>
            <person name="Lindahl G.E."/>
            <person name="Wade D.P."/>
            <person name="Byrne C.D."/>
            <person name="Fong K.J."/>
            <person name="Meer K."/>
            <person name="Patthy L."/>
        </authorList>
    </citation>
    <scope>NUCLEOTIDE SEQUENCE [MRNA]</scope>
    <source>
        <tissue>Liver</tissue>
    </source>
</reference>
<reference key="2">
    <citation type="submission" date="1997-02" db="EMBL/GenBank/DDBJ databases">
        <authorList>
            <person name="Lawn R.M."/>
        </authorList>
    </citation>
    <scope>SEQUENCE REVISION</scope>
</reference>
<organism>
    <name type="scientific">Erinaceus europaeus</name>
    <name type="common">Western European hedgehog</name>
    <dbReference type="NCBI Taxonomy" id="9365"/>
    <lineage>
        <taxon>Eukaryota</taxon>
        <taxon>Metazoa</taxon>
        <taxon>Chordata</taxon>
        <taxon>Craniata</taxon>
        <taxon>Vertebrata</taxon>
        <taxon>Euteleostomi</taxon>
        <taxon>Mammalia</taxon>
        <taxon>Eutheria</taxon>
        <taxon>Laurasiatheria</taxon>
        <taxon>Eulipotyphla</taxon>
        <taxon>Erinaceidae</taxon>
        <taxon>Erinaceinae</taxon>
        <taxon>Erinaceus</taxon>
    </lineage>
</organism>
<keyword id="KW-0094">Blood coagulation</keyword>
<keyword id="KW-0165">Cleavage on pair of basic residues</keyword>
<keyword id="KW-1015">Disulfide bond</keyword>
<keyword id="KW-0280">Fibrinolysis</keyword>
<keyword id="KW-0325">Glycoprotein</keyword>
<keyword id="KW-0356">Hemostasis</keyword>
<keyword id="KW-0378">Hydrolase</keyword>
<keyword id="KW-0420">Kringle</keyword>
<keyword id="KW-0597">Phosphoprotein</keyword>
<keyword id="KW-0645">Protease</keyword>
<keyword id="KW-1185">Reference proteome</keyword>
<keyword id="KW-0677">Repeat</keyword>
<keyword id="KW-0964">Secreted</keyword>
<keyword id="KW-0720">Serine protease</keyword>
<keyword id="KW-0732">Signal</keyword>
<keyword id="KW-0797">Tissue remodeling</keyword>
<keyword id="KW-0865">Zymogen</keyword>
<accession>Q29485</accession>
<proteinExistence type="evidence at transcript level"/>
<comment type="function">
    <text evidence="1">Plasmin dissolves the fibrin of blood clots and acts as a proteolytic factor in a variety of other processes including embryonic development, tissue remodeling, tumor invasion, and inflammation. In ovulation, weakens the walls of the Graafian follicle. It activates the urokinase-type plasminogen activator, collagenases and several complement zymogens, such as C1, C4 and C5. Cleavage of fibronectin and laminin leads to cell detachment and apoptosis. Also cleaves fibrin, thrombospondin and von Willebrand factor. Its role in tissue remodeling and tumor invasion may be modulated by CSPG4. Binds to cells (By similarity).</text>
</comment>
<comment type="catalytic activity">
    <reaction>
        <text>Preferential cleavage: Lys-|-Xaa &gt; Arg-|-Xaa, higher selectivity than trypsin. Converts fibrin into soluble products.</text>
        <dbReference type="EC" id="3.4.21.7"/>
    </reaction>
</comment>
<comment type="activity regulation">
    <text>Converted into plasmin by plasminogen activators, both plasminogen and its activator being bound to fibrin. Cannot be activated with streptokinase.</text>
</comment>
<comment type="subunit">
    <text evidence="2">Interacts with CSPG4 and AMOT. Interacts (via the Kringle domains) with HRG; the interaction tethers PLG to the cell surface and enhances its activation. Interacts (via Kringle 4 domain) with ADA; the interaction stimulates PLG activation when in complex with DPP4. Angiostatin: Interacts with ATP5F1A; the interaction inhibits most of the angiogenic effects of angiostatin.</text>
</comment>
<comment type="subcellular location">
    <subcellularLocation>
        <location evidence="1">Secreted</location>
    </subcellularLocation>
    <text evidence="1">Locates to the cell surface where it is proteolytically cleaved to produce the active plasmin. Interaction with HRG tethers it to the cell surface (By similarity).</text>
</comment>
<comment type="domain">
    <text evidence="1">Kringle domains mediate interaction with CSPG4.</text>
</comment>
<comment type="PTM">
    <text evidence="1">In the presence of the inhibitor, the activation involves only cleavage after Arg-582, yielding two chains held together by two disulfide bonds. In the absence of the inhibitor, the activation involves additionally the removal of the activation peptide (By similarity).</text>
</comment>
<comment type="miscellaneous">
    <text>Plasmin is inactivated by alpha-2-antiplasmin immediately after dissociation from the clot.</text>
</comment>
<comment type="similarity">
    <text evidence="5">Belongs to the peptidase S1 family. Plasminogen subfamily.</text>
</comment>
<gene>
    <name type="primary">PLG</name>
</gene>
<sequence length="810" mass="90902">MQRKELVLLFLLFLQPGHGIPLDDYVTTQGASLCSSTKKQLSVGSTEECAVKCEKETSFICRSFQYHSKEQQCVIMAENSKSTPVLRMRDVILFEKKMYLSECKVGNGKYYRGTVSKTKTGLTCQKWSAETPHKPRFSPDENPSEGLDQNYCRNPDNDPKGPWCYTMDPEVRYEYCEIIQCEDECMHCSGQNYVGKISRTMSGLECQPWDSQIPHPHGFIPSKFPSKNLKMNYCRNPDGEPRPWCFTMDRNKRWEYCDIPRCTTPPPPSGPTYQCLMGNGEHYQGNVAVTVSGLTCQRWGEQSPHRHDRTPENYPCKNLDENYCRNPDGEPAPWCFTTNSSVRWEFCKIPDCVSSASETEHSDAPVIVPPEQTPVVQECYQGNGQTYRGTSSTTITGKKCQPWTSMRPHRHSKTPENYPDADLTMNYCRNPDGDKGPWCYTTDPSVRWEFCNLKKCSGTEMSATNSSPVQVSSASESSEQDCIIDNGKGYRGTKATTGAGTPCQAWAAQEPHRHSIFTPETNPRADLQENYCRNPDGDANGPWCYTTNPRKLFDYCDIPHCVSPSSADCGKPKVEPKKCPGRVGGCVAHPHSWPWQVSLRRFGQHFCGGTLISPEWVVTAAHCLEKFSNPAIYKVVLGAHQETRLERDVQIKGVTKMFLEPYRADIALLKLSSPAIITDKDHPACLPNSNYMVADRSLCYITGWGETKGTYGAGLLKEAQLPVIENKVCNRQSFLNGRVRSTELCAGHLAGGVDSCQGDSGGPLVCFEKDRYILQGVTSWGLGCARLTRPGVYVRVSRYVSWLQDVMRNN</sequence>
<protein>
    <recommendedName>
        <fullName>Plasminogen</fullName>
        <ecNumber>3.4.21.7</ecNumber>
    </recommendedName>
    <component>
        <recommendedName>
            <fullName>Plasmin heavy chain A</fullName>
        </recommendedName>
    </component>
    <component>
        <recommendedName>
            <fullName>Activation peptide</fullName>
        </recommendedName>
    </component>
    <component>
        <recommendedName>
            <fullName>Plasmin heavy chain A, short form</fullName>
        </recommendedName>
    </component>
    <component>
        <recommendedName>
            <fullName>Plasmin light chain B</fullName>
        </recommendedName>
    </component>
</protein>
<dbReference type="EC" id="3.4.21.7"/>
<dbReference type="EMBL" id="U33171">
    <property type="protein sequence ID" value="AAC48717.1"/>
    <property type="molecule type" value="mRNA"/>
</dbReference>
<dbReference type="PIR" id="I46260">
    <property type="entry name" value="I46260"/>
</dbReference>
<dbReference type="SMR" id="Q29485"/>
<dbReference type="FunCoup" id="Q29485">
    <property type="interactions" value="260"/>
</dbReference>
<dbReference type="MEROPS" id="S01.233"/>
<dbReference type="GlyCosmos" id="Q29485">
    <property type="glycosylation" value="1 site, No reported glycans"/>
</dbReference>
<dbReference type="eggNOG" id="ENOG502QVNP">
    <property type="taxonomic scope" value="Eukaryota"/>
</dbReference>
<dbReference type="InParanoid" id="Q29485"/>
<dbReference type="Proteomes" id="UP000079721">
    <property type="component" value="Unplaced"/>
</dbReference>
<dbReference type="GO" id="GO:0005615">
    <property type="term" value="C:extracellular space"/>
    <property type="evidence" value="ECO:0007669"/>
    <property type="project" value="TreeGrafter"/>
</dbReference>
<dbReference type="GO" id="GO:0004252">
    <property type="term" value="F:serine-type endopeptidase activity"/>
    <property type="evidence" value="ECO:0007669"/>
    <property type="project" value="UniProtKB-EC"/>
</dbReference>
<dbReference type="GO" id="GO:0005102">
    <property type="term" value="F:signaling receptor binding"/>
    <property type="evidence" value="ECO:0007669"/>
    <property type="project" value="TreeGrafter"/>
</dbReference>
<dbReference type="GO" id="GO:0007596">
    <property type="term" value="P:blood coagulation"/>
    <property type="evidence" value="ECO:0007669"/>
    <property type="project" value="UniProtKB-KW"/>
</dbReference>
<dbReference type="GO" id="GO:0042730">
    <property type="term" value="P:fibrinolysis"/>
    <property type="evidence" value="ECO:0007669"/>
    <property type="project" value="UniProtKB-KW"/>
</dbReference>
<dbReference type="GO" id="GO:0006508">
    <property type="term" value="P:proteolysis"/>
    <property type="evidence" value="ECO:0007669"/>
    <property type="project" value="UniProtKB-KW"/>
</dbReference>
<dbReference type="GO" id="GO:0048771">
    <property type="term" value="P:tissue remodeling"/>
    <property type="evidence" value="ECO:0007669"/>
    <property type="project" value="UniProtKB-KW"/>
</dbReference>
<dbReference type="CDD" id="cd00108">
    <property type="entry name" value="KR"/>
    <property type="match status" value="5"/>
</dbReference>
<dbReference type="CDD" id="cd01099">
    <property type="entry name" value="PAN_AP_HGF"/>
    <property type="match status" value="1"/>
</dbReference>
<dbReference type="CDD" id="cd00190">
    <property type="entry name" value="Tryp_SPc"/>
    <property type="match status" value="1"/>
</dbReference>
<dbReference type="FunFam" id="2.40.20.10:FF:000002">
    <property type="entry name" value="Hepatocyte growth factor"/>
    <property type="match status" value="1"/>
</dbReference>
<dbReference type="FunFam" id="2.40.20.10:FF:000004">
    <property type="entry name" value="Hepatocyte growth factor"/>
    <property type="match status" value="1"/>
</dbReference>
<dbReference type="FunFam" id="2.40.20.10:FF:000005">
    <property type="entry name" value="Plasminogen"/>
    <property type="match status" value="1"/>
</dbReference>
<dbReference type="FunFam" id="2.40.20.10:FF:000011">
    <property type="entry name" value="Plasminogen"/>
    <property type="match status" value="1"/>
</dbReference>
<dbReference type="FunFam" id="2.40.20.10:FF:000014">
    <property type="entry name" value="Plasminogen"/>
    <property type="match status" value="1"/>
</dbReference>
<dbReference type="FunFam" id="3.50.4.10:FF:000027">
    <property type="entry name" value="Plasminogen"/>
    <property type="match status" value="1"/>
</dbReference>
<dbReference type="FunFam" id="2.40.10.10:FF:000003">
    <property type="entry name" value="Transmembrane serine protease 3"/>
    <property type="match status" value="1"/>
</dbReference>
<dbReference type="Gene3D" id="3.50.4.10">
    <property type="entry name" value="Hepatocyte Growth Factor"/>
    <property type="match status" value="1"/>
</dbReference>
<dbReference type="Gene3D" id="2.40.20.10">
    <property type="entry name" value="Plasminogen Kringle 4"/>
    <property type="match status" value="4"/>
</dbReference>
<dbReference type="Gene3D" id="2.40.10.10">
    <property type="entry name" value="Trypsin-like serine proteases"/>
    <property type="match status" value="1"/>
</dbReference>
<dbReference type="InterPro" id="IPR000001">
    <property type="entry name" value="Kringle"/>
</dbReference>
<dbReference type="InterPro" id="IPR013806">
    <property type="entry name" value="Kringle-like"/>
</dbReference>
<dbReference type="InterPro" id="IPR018056">
    <property type="entry name" value="Kringle_CS"/>
</dbReference>
<dbReference type="InterPro" id="IPR038178">
    <property type="entry name" value="Kringle_sf"/>
</dbReference>
<dbReference type="InterPro" id="IPR003609">
    <property type="entry name" value="Pan_app"/>
</dbReference>
<dbReference type="InterPro" id="IPR023317">
    <property type="entry name" value="Pept_S1A_plasmin"/>
</dbReference>
<dbReference type="InterPro" id="IPR009003">
    <property type="entry name" value="Peptidase_S1_PA"/>
</dbReference>
<dbReference type="InterPro" id="IPR043504">
    <property type="entry name" value="Peptidase_S1_PA_chymotrypsin"/>
</dbReference>
<dbReference type="InterPro" id="IPR001314">
    <property type="entry name" value="Peptidase_S1A"/>
</dbReference>
<dbReference type="InterPro" id="IPR050759">
    <property type="entry name" value="Serine_protease_kringle"/>
</dbReference>
<dbReference type="InterPro" id="IPR001254">
    <property type="entry name" value="Trypsin_dom"/>
</dbReference>
<dbReference type="InterPro" id="IPR018114">
    <property type="entry name" value="TRYPSIN_HIS"/>
</dbReference>
<dbReference type="InterPro" id="IPR033116">
    <property type="entry name" value="TRYPSIN_SER"/>
</dbReference>
<dbReference type="PANTHER" id="PTHR24261:SF2">
    <property type="entry name" value="LIPOPROTEIN(A)"/>
    <property type="match status" value="1"/>
</dbReference>
<dbReference type="PANTHER" id="PTHR24261">
    <property type="entry name" value="PLASMINOGEN-RELATED"/>
    <property type="match status" value="1"/>
</dbReference>
<dbReference type="Pfam" id="PF00051">
    <property type="entry name" value="Kringle"/>
    <property type="match status" value="5"/>
</dbReference>
<dbReference type="Pfam" id="PF00024">
    <property type="entry name" value="PAN_1"/>
    <property type="match status" value="1"/>
</dbReference>
<dbReference type="Pfam" id="PF00089">
    <property type="entry name" value="Trypsin"/>
    <property type="match status" value="1"/>
</dbReference>
<dbReference type="PIRSF" id="PIRSF001150">
    <property type="entry name" value="Plasmin"/>
    <property type="match status" value="1"/>
</dbReference>
<dbReference type="PRINTS" id="PR00722">
    <property type="entry name" value="CHYMOTRYPSIN"/>
</dbReference>
<dbReference type="PRINTS" id="PR00018">
    <property type="entry name" value="KRINGLE"/>
</dbReference>
<dbReference type="SMART" id="SM00130">
    <property type="entry name" value="KR"/>
    <property type="match status" value="5"/>
</dbReference>
<dbReference type="SMART" id="SM00473">
    <property type="entry name" value="PAN_AP"/>
    <property type="match status" value="1"/>
</dbReference>
<dbReference type="SMART" id="SM00020">
    <property type="entry name" value="Tryp_SPc"/>
    <property type="match status" value="1"/>
</dbReference>
<dbReference type="SUPFAM" id="SSF57414">
    <property type="entry name" value="Hairpin loop containing domain-like"/>
    <property type="match status" value="1"/>
</dbReference>
<dbReference type="SUPFAM" id="SSF57440">
    <property type="entry name" value="Kringle-like"/>
    <property type="match status" value="5"/>
</dbReference>
<dbReference type="SUPFAM" id="SSF50494">
    <property type="entry name" value="Trypsin-like serine proteases"/>
    <property type="match status" value="1"/>
</dbReference>
<dbReference type="PROSITE" id="PS00021">
    <property type="entry name" value="KRINGLE_1"/>
    <property type="match status" value="5"/>
</dbReference>
<dbReference type="PROSITE" id="PS50070">
    <property type="entry name" value="KRINGLE_2"/>
    <property type="match status" value="5"/>
</dbReference>
<dbReference type="PROSITE" id="PS50948">
    <property type="entry name" value="PAN"/>
    <property type="match status" value="1"/>
</dbReference>
<dbReference type="PROSITE" id="PS50240">
    <property type="entry name" value="TRYPSIN_DOM"/>
    <property type="match status" value="1"/>
</dbReference>
<dbReference type="PROSITE" id="PS00134">
    <property type="entry name" value="TRYPSIN_HIS"/>
    <property type="match status" value="1"/>
</dbReference>
<dbReference type="PROSITE" id="PS00135">
    <property type="entry name" value="TRYPSIN_SER"/>
    <property type="match status" value="1"/>
</dbReference>
<name>PLMN_ERIEU</name>
<feature type="signal peptide" evidence="1">
    <location>
        <begin position="1"/>
        <end position="19"/>
    </location>
</feature>
<feature type="chain" id="PRO_0000028046" description="Plasminogen">
    <location>
        <begin position="20"/>
        <end position="810"/>
    </location>
</feature>
<feature type="chain" id="PRO_0000028047" description="Plasmin heavy chain A" evidence="1">
    <location>
        <begin position="20"/>
        <end position="582"/>
    </location>
</feature>
<feature type="peptide" id="PRO_0000028048" description="Activation peptide" evidence="1">
    <location>
        <begin position="20"/>
        <end position="97"/>
    </location>
</feature>
<feature type="chain" id="PRO_0000028049" description="Plasmin heavy chain A, short form" evidence="1">
    <location>
        <begin position="98"/>
        <end position="582"/>
    </location>
</feature>
<feature type="chain" id="PRO_0000028050" description="Plasmin light chain B" evidence="1">
    <location>
        <begin position="583"/>
        <end position="810"/>
    </location>
</feature>
<feature type="domain" description="PAN" evidence="6">
    <location>
        <begin position="20"/>
        <end position="98"/>
    </location>
</feature>
<feature type="domain" description="Kringle 1" evidence="4">
    <location>
        <begin position="103"/>
        <end position="181"/>
    </location>
</feature>
<feature type="domain" description="Kringle 2" evidence="4">
    <location>
        <begin position="185"/>
        <end position="262"/>
    </location>
</feature>
<feature type="domain" description="Kringle 3" evidence="4">
    <location>
        <begin position="275"/>
        <end position="352"/>
    </location>
</feature>
<feature type="domain" description="Kringle 4" evidence="4">
    <location>
        <begin position="379"/>
        <end position="456"/>
    </location>
</feature>
<feature type="domain" description="Kringle 5" evidence="4">
    <location>
        <begin position="482"/>
        <end position="561"/>
    </location>
</feature>
<feature type="domain" description="Peptidase S1" evidence="5">
    <location>
        <begin position="582"/>
        <end position="808"/>
    </location>
</feature>
<feature type="region of interest" description="Disordered" evidence="7">
    <location>
        <begin position="398"/>
        <end position="418"/>
    </location>
</feature>
<feature type="active site" description="Charge relay system">
    <location>
        <position position="622"/>
    </location>
</feature>
<feature type="active site" description="Charge relay system">
    <location>
        <position position="665"/>
    </location>
</feature>
<feature type="active site" description="Charge relay system">
    <location>
        <position position="760"/>
    </location>
</feature>
<feature type="modified residue" description="Phosphoserine" evidence="2">
    <location>
        <position position="598"/>
    </location>
</feature>
<feature type="glycosylation site" description="N-linked (GlcNAc...) asparagine" evidence="3">
    <location>
        <position position="339"/>
    </location>
</feature>
<feature type="disulfide bond" evidence="1">
    <location>
        <begin position="49"/>
        <end position="73"/>
    </location>
</feature>
<feature type="disulfide bond" evidence="1">
    <location>
        <begin position="53"/>
        <end position="61"/>
    </location>
</feature>
<feature type="disulfide bond" evidence="1">
    <location>
        <begin position="103"/>
        <end position="181"/>
    </location>
</feature>
<feature type="disulfide bond" evidence="1">
    <location>
        <begin position="124"/>
        <end position="164"/>
    </location>
</feature>
<feature type="disulfide bond" evidence="1">
    <location>
        <begin position="152"/>
        <end position="176"/>
    </location>
</feature>
<feature type="disulfide bond" evidence="1">
    <location>
        <begin position="185"/>
        <end position="262"/>
    </location>
</feature>
<feature type="disulfide bond" evidence="1">
    <location>
        <begin position="188"/>
        <end position="316"/>
    </location>
</feature>
<feature type="disulfide bond" evidence="1">
    <location>
        <begin position="206"/>
        <end position="245"/>
    </location>
</feature>
<feature type="disulfide bond" evidence="1">
    <location>
        <begin position="234"/>
        <end position="257"/>
    </location>
</feature>
<feature type="disulfide bond" evidence="1">
    <location>
        <begin position="275"/>
        <end position="352"/>
    </location>
</feature>
<feature type="disulfide bond" evidence="1">
    <location>
        <begin position="296"/>
        <end position="335"/>
    </location>
</feature>
<feature type="disulfide bond" evidence="1">
    <location>
        <begin position="324"/>
        <end position="347"/>
    </location>
</feature>
<feature type="disulfide bond" evidence="1">
    <location>
        <begin position="379"/>
        <end position="456"/>
    </location>
</feature>
<feature type="disulfide bond" evidence="1">
    <location>
        <begin position="400"/>
        <end position="439"/>
    </location>
</feature>
<feature type="disulfide bond" evidence="1">
    <location>
        <begin position="428"/>
        <end position="451"/>
    </location>
</feature>
<feature type="disulfide bond" evidence="1">
    <location>
        <begin position="482"/>
        <end position="561"/>
    </location>
</feature>
<feature type="disulfide bond" evidence="1">
    <location>
        <begin position="503"/>
        <end position="544"/>
    </location>
</feature>
<feature type="disulfide bond" evidence="1">
    <location>
        <begin position="532"/>
        <end position="556"/>
    </location>
</feature>
<feature type="disulfide bond" description="Interchain (between A and B chains)" evidence="1">
    <location>
        <begin position="569"/>
        <end position="685"/>
    </location>
</feature>
<feature type="disulfide bond" description="Interchain (between A and B chains)" evidence="1">
    <location>
        <begin position="579"/>
        <end position="586"/>
    </location>
</feature>
<feature type="disulfide bond" evidence="1">
    <location>
        <begin position="607"/>
        <end position="623"/>
    </location>
</feature>
<feature type="disulfide bond" evidence="1">
    <location>
        <begin position="699"/>
        <end position="766"/>
    </location>
</feature>
<feature type="disulfide bond" evidence="1">
    <location>
        <begin position="729"/>
        <end position="745"/>
    </location>
</feature>
<feature type="disulfide bond" evidence="1">
    <location>
        <begin position="756"/>
        <end position="784"/>
    </location>
</feature>